<accession>P08621</accession>
<accession>B3KUA3</accession>
<accession>P78493</accession>
<accession>P78494</accession>
<accession>Q15364</accession>
<accession>Q15686</accession>
<accession>Q15687</accession>
<accession>Q15689</accession>
<accession>Q99377</accession>
<accession>Q9UE45</accession>
<accession>Q9UE46</accession>
<accession>Q9UE47</accession>
<accession>Q9UE48</accession>
<accession>Q9UFQ6</accession>
<organism>
    <name type="scientific">Homo sapiens</name>
    <name type="common">Human</name>
    <dbReference type="NCBI Taxonomy" id="9606"/>
    <lineage>
        <taxon>Eukaryota</taxon>
        <taxon>Metazoa</taxon>
        <taxon>Chordata</taxon>
        <taxon>Craniata</taxon>
        <taxon>Vertebrata</taxon>
        <taxon>Euteleostomi</taxon>
        <taxon>Mammalia</taxon>
        <taxon>Eutheria</taxon>
        <taxon>Euarchontoglires</taxon>
        <taxon>Primates</taxon>
        <taxon>Haplorrhini</taxon>
        <taxon>Catarrhini</taxon>
        <taxon>Hominidae</taxon>
        <taxon>Homo</taxon>
    </lineage>
</organism>
<proteinExistence type="evidence at protein level"/>
<keyword id="KW-0002">3D-structure</keyword>
<keyword id="KW-0007">Acetylation</keyword>
<keyword id="KW-0025">Alternative splicing</keyword>
<keyword id="KW-0903">Direct protein sequencing</keyword>
<keyword id="KW-1017">Isopeptide bond</keyword>
<keyword id="KW-0507">mRNA processing</keyword>
<keyword id="KW-0539">Nucleus</keyword>
<keyword id="KW-0597">Phosphoprotein</keyword>
<keyword id="KW-1267">Proteomics identification</keyword>
<keyword id="KW-1185">Reference proteome</keyword>
<keyword id="KW-0687">Ribonucleoprotein</keyword>
<keyword id="KW-0694">RNA-binding</keyword>
<keyword id="KW-0832">Ubl conjugation</keyword>
<name>RU17_HUMAN</name>
<comment type="function">
    <text evidence="10 12 13">Component of the spliceosomal U1 snRNP, which is essential for recognition of the pre-mRNA 5' splice-site and the subsequent assembly of the spliceosome (PubMed:19325628, PubMed:25555158). SNRNP70 binds to the loop I region of U1-snRNA (PubMed:19325628, PubMed:2467746, PubMed:25555158).</text>
</comment>
<comment type="function">
    <molecule>Isoform 3</molecule>
    <text evidence="12">Truncated isoforms that lack the RRM domain cannot bind U1-snRNA.</text>
</comment>
<comment type="function">
    <molecule>Isoform 4</molecule>
    <text evidence="12">Truncated isoforms that lack the RRM domain cannot bind U1-snRNA.</text>
</comment>
<comment type="subunit">
    <text evidence="1 4 5 6 7 8 10 11 13 14 15 17 18">Component of the U1 snRNP (PubMed:19325628, PubMed:21113136, PubMed:25555158). The U1 snRNP is composed of the U1 snRNA and the 7 core Sm proteins SNRPB, SNRPD1, SNRPD2, SNRPD3, SNRPE, SNRPF and SNRPG that assemble in a heptameric protein ring on the Sm site of the small nuclear RNA to form the core snRNP, and at least three U1 snRNP-specific proteins SNRNP70/U1-70K, SNRPA/U1-A and SNRPC/U1-C (PubMed:19325628, PubMed:21113136, PubMed:25555158). Interacts with SCNM1 (By similarity). Found in a pre-mRNA splicing complex with SFRS4, SFRS5, SNRNP70, SNRPA1, SRRM1 and SRRM2 (PubMed:9531537). Found in a pre-mRNA exonic splicing enhancer (ESE) complex with SNRNP70, SNRPA1, SRRM1 and TRA2B/SFRS10 (PubMed:10339552). Interacts with dephosphorylated SFRS13A and SFPQ (PubMed:11514619, PubMed:14765198). Interacts with NUDT21/CPSF5, CPSF6, SCAF11, and ZRANB2 (PubMed:11448987, PubMed:14561889, PubMed:9447963). Interacts with GEMIN5 (PubMed:25911097). Interacts with FUS.</text>
</comment>
<comment type="interaction">
    <interactant intactId="EBI-1049228">
        <id>P08621</id>
    </interactant>
    <interactant intactId="EBI-741977">
        <id>Q96MT8</id>
        <label>CEP63</label>
    </interactant>
    <organismsDiffer>false</organismsDiffer>
    <experiments>3</experiments>
</comment>
<comment type="interaction">
    <interactant intactId="EBI-1049228">
        <id>P08621</id>
    </interactant>
    <interactant intactId="EBI-750020">
        <id>P49760</id>
        <label>CLK2</label>
    </interactant>
    <organismsDiffer>false</organismsDiffer>
    <experiments>7</experiments>
</comment>
<comment type="interaction">
    <interactant intactId="EBI-1049228">
        <id>P08621</id>
    </interactant>
    <interactant intactId="EBI-6115579">
        <id>Q9BX10</id>
        <label>GTPBP2</label>
    </interactant>
    <organismsDiffer>false</organismsDiffer>
    <experiments>3</experiments>
</comment>
<comment type="interaction">
    <interactant intactId="EBI-1049228">
        <id>P08621</id>
    </interactant>
    <interactant intactId="EBI-395421">
        <id>Q16637</id>
        <label>SMN2</label>
    </interactant>
    <organismsDiffer>false</organismsDiffer>
    <experiments>9</experiments>
</comment>
<comment type="interaction">
    <interactant intactId="EBI-1049228">
        <id>P08621</id>
    </interactant>
    <interactant intactId="EBI-539478">
        <id>Q96SB4</id>
        <label>SRPK1</label>
    </interactant>
    <organismsDiffer>false</organismsDiffer>
    <experiments>5</experiments>
</comment>
<comment type="interaction">
    <interactant intactId="EBI-1049228">
        <id>P08621</id>
    </interactant>
    <interactant intactId="EBI-593303">
        <id>P78362</id>
        <label>SRPK2</label>
    </interactant>
    <organismsDiffer>false</organismsDiffer>
    <experiments>6</experiments>
</comment>
<comment type="interaction">
    <interactant intactId="EBI-1049228">
        <id>P08621</id>
    </interactant>
    <interactant intactId="EBI-3867173">
        <id>A7MD48</id>
        <label>SRRM4</label>
    </interactant>
    <organismsDiffer>false</organismsDiffer>
    <experiments>3</experiments>
</comment>
<comment type="interaction">
    <interactant intactId="EBI-1049228">
        <id>P08621</id>
    </interactant>
    <interactant intactId="EBI-398920">
        <id>Q07955</id>
        <label>SRSF1</label>
    </interactant>
    <organismsDiffer>false</organismsDiffer>
    <experiments>5</experiments>
</comment>
<comment type="interaction">
    <interactant intactId="EBI-1049228">
        <id>P08621</id>
    </interactant>
    <interactant intactId="EBI-1387216">
        <id>P31483</id>
        <label>TIA1</label>
    </interactant>
    <organismsDiffer>false</organismsDiffer>
    <experiments>2</experiments>
</comment>
<comment type="subcellular location">
    <subcellularLocation>
        <location evidence="9">Nucleus speckle</location>
    </subcellularLocation>
    <subcellularLocation>
        <location evidence="9 11">Nucleus</location>
        <location evidence="9 11">Nucleoplasm</location>
    </subcellularLocation>
    <text evidence="1">Colocalizes with SCNM1 and LUC7L2 in nuclear speckles.</text>
</comment>
<comment type="alternative products">
    <event type="alternative splicing"/>
    <isoform>
        <id>P08621-1</id>
        <name>1</name>
        <sequence type="displayed"/>
    </isoform>
    <isoform>
        <id>P08621-2</id>
        <name>2</name>
        <sequence type="described" ref="VSP_005850"/>
    </isoform>
    <isoform>
        <id>P08621-3</id>
        <name>3</name>
        <sequence type="described" ref="VSP_005848 VSP_005849"/>
    </isoform>
    <isoform>
        <id>P08621-4</id>
        <name>4</name>
        <sequence type="described" ref="VSP_005847"/>
    </isoform>
</comment>
<comment type="domain">
    <text evidence="12 13">The RRM domain mediates interaction with U1 RNA.</text>
</comment>
<comment type="PTM">
    <text>The N-terminus is blocked.</text>
</comment>
<comment type="PTM">
    <text evidence="16">Extensively phosphorylated on serine residues in the C-terminal region.</text>
</comment>
<comment type="miscellaneous">
    <text>Major ribonucleoprotein antigen recognized by the sera from patients with autoimmune diseases, such as systemic lupus erythematosus.</text>
</comment>
<comment type="sequence caution" evidence="24">
    <conflict type="erroneous initiation">
        <sequence resource="EMBL-CDS" id="CAA28352"/>
    </conflict>
    <text>Extended N-terminus.</text>
</comment>
<comment type="sequence caution" evidence="24">
    <conflict type="erroneous initiation">
        <sequence resource="EMBL-CDS" id="CAA29964"/>
    </conflict>
    <text>Extended N-terminus.</text>
</comment>
<comment type="sequence caution" evidence="24">
    <conflict type="erroneous initiation">
        <sequence resource="EMBL-CDS" id="CAA29966"/>
    </conflict>
    <text>Extended N-terminus.</text>
</comment>
<gene>
    <name type="primary">SNRNP70</name>
    <name type="synonym">RNPU1Z</name>
    <name type="synonym">RPU1</name>
    <name type="synonym">SNRP70</name>
    <name type="synonym">U1AP1</name>
</gene>
<evidence type="ECO:0000250" key="1">
    <source>
        <dbReference type="UniProtKB" id="Q62376"/>
    </source>
</evidence>
<evidence type="ECO:0000255" key="2">
    <source>
        <dbReference type="PROSITE-ProRule" id="PRU00176"/>
    </source>
</evidence>
<evidence type="ECO:0000256" key="3">
    <source>
        <dbReference type="SAM" id="MobiDB-lite"/>
    </source>
</evidence>
<evidence type="ECO:0000269" key="4">
    <source>
    </source>
</evidence>
<evidence type="ECO:0000269" key="5">
    <source>
    </source>
</evidence>
<evidence type="ECO:0000269" key="6">
    <source>
    </source>
</evidence>
<evidence type="ECO:0000269" key="7">
    <source>
    </source>
</evidence>
<evidence type="ECO:0000269" key="8">
    <source>
    </source>
</evidence>
<evidence type="ECO:0000269" key="9">
    <source>
    </source>
</evidence>
<evidence type="ECO:0000269" key="10">
    <source>
    </source>
</evidence>
<evidence type="ECO:0000269" key="11">
    <source>
    </source>
</evidence>
<evidence type="ECO:0000269" key="12">
    <source>
    </source>
</evidence>
<evidence type="ECO:0000269" key="13">
    <source>
    </source>
</evidence>
<evidence type="ECO:0000269" key="14">
    <source>
    </source>
</evidence>
<evidence type="ECO:0000269" key="15">
    <source>
    </source>
</evidence>
<evidence type="ECO:0000269" key="16">
    <source>
    </source>
</evidence>
<evidence type="ECO:0000269" key="17">
    <source>
    </source>
</evidence>
<evidence type="ECO:0000269" key="18">
    <source>
    </source>
</evidence>
<evidence type="ECO:0000303" key="19">
    <source>
    </source>
</evidence>
<evidence type="ECO:0000303" key="20">
    <source>
    </source>
</evidence>
<evidence type="ECO:0000303" key="21">
    <source>
    </source>
</evidence>
<evidence type="ECO:0000303" key="22">
    <source>
    </source>
</evidence>
<evidence type="ECO:0000303" key="23">
    <source>
    </source>
</evidence>
<evidence type="ECO:0000305" key="24"/>
<evidence type="ECO:0007744" key="25">
    <source>
        <dbReference type="PDB" id="3PGW"/>
    </source>
</evidence>
<evidence type="ECO:0007744" key="26">
    <source>
        <dbReference type="PDB" id="4PJO"/>
    </source>
</evidence>
<evidence type="ECO:0007744" key="27">
    <source>
        <dbReference type="PDB" id="4PKD"/>
    </source>
</evidence>
<evidence type="ECO:0007744" key="28">
    <source>
    </source>
</evidence>
<evidence type="ECO:0007744" key="29">
    <source>
    </source>
</evidence>
<evidence type="ECO:0007744" key="30">
    <source>
    </source>
</evidence>
<evidence type="ECO:0007744" key="31">
    <source>
    </source>
</evidence>
<evidence type="ECO:0007744" key="32">
    <source>
    </source>
</evidence>
<evidence type="ECO:0007744" key="33">
    <source>
    </source>
</evidence>
<evidence type="ECO:0007744" key="34">
    <source>
    </source>
</evidence>
<evidence type="ECO:0007744" key="35">
    <source>
    </source>
</evidence>
<evidence type="ECO:0007744" key="36">
    <source>
    </source>
</evidence>
<evidence type="ECO:0007744" key="37">
    <source>
    </source>
</evidence>
<evidence type="ECO:0007744" key="38">
    <source>
    </source>
</evidence>
<evidence type="ECO:0007744" key="39">
    <source>
    </source>
</evidence>
<evidence type="ECO:0007744" key="40">
    <source>
    </source>
</evidence>
<evidence type="ECO:0007744" key="41">
    <source>
    </source>
</evidence>
<evidence type="ECO:0007744" key="42">
    <source>
    </source>
</evidence>
<evidence type="ECO:0007744" key="43">
    <source>
    </source>
</evidence>
<evidence type="ECO:0007829" key="44">
    <source>
        <dbReference type="PDB" id="4PKD"/>
    </source>
</evidence>
<evidence type="ECO:0007829" key="45">
    <source>
        <dbReference type="PDB" id="7VPX"/>
    </source>
</evidence>
<dbReference type="EMBL" id="X04654">
    <property type="protein sequence ID" value="CAA28352.1"/>
    <property type="status" value="ALT_INIT"/>
    <property type="molecule type" value="mRNA"/>
</dbReference>
<dbReference type="EMBL" id="X06814">
    <property type="protein sequence ID" value="CAA29963.1"/>
    <property type="molecule type" value="mRNA"/>
</dbReference>
<dbReference type="EMBL" id="X06815">
    <property type="protein sequence ID" value="CAA29964.1"/>
    <property type="status" value="ALT_INIT"/>
    <property type="molecule type" value="mRNA"/>
</dbReference>
<dbReference type="EMBL" id="X06817">
    <property type="protein sequence ID" value="CAA29966.1"/>
    <property type="status" value="ALT_INIT"/>
    <property type="molecule type" value="mRNA"/>
</dbReference>
<dbReference type="EMBL" id="X07402">
    <property type="protein sequence ID" value="CAA30304.1"/>
    <property type="molecule type" value="mRNA"/>
</dbReference>
<dbReference type="EMBL" id="X06816">
    <property type="protein sequence ID" value="CAA29965.1"/>
    <property type="molecule type" value="mRNA"/>
</dbReference>
<dbReference type="EMBL" id="X06812">
    <property type="protein sequence ID" value="CAA29961.1"/>
    <property type="molecule type" value="mRNA"/>
</dbReference>
<dbReference type="EMBL" id="X06811">
    <property type="protein sequence ID" value="CAA29960.1"/>
    <property type="molecule type" value="mRNA"/>
</dbReference>
<dbReference type="EMBL" id="X07401">
    <property type="protein sequence ID" value="CAA30303.1"/>
    <property type="molecule type" value="mRNA"/>
</dbReference>
<dbReference type="EMBL" id="X07403">
    <property type="protein sequence ID" value="CAA30305.1"/>
    <property type="molecule type" value="mRNA"/>
</dbReference>
<dbReference type="EMBL" id="M22636">
    <property type="protein sequence ID" value="AAA03001.1"/>
    <property type="molecule type" value="mRNA"/>
</dbReference>
<dbReference type="EMBL" id="M57939">
    <property type="protein sequence ID" value="AAA36572.1"/>
    <property type="molecule type" value="Genomic_DNA"/>
</dbReference>
<dbReference type="EMBL" id="M57929">
    <property type="protein sequence ID" value="AAA36572.1"/>
    <property type="status" value="JOINED"/>
    <property type="molecule type" value="Genomic_DNA"/>
</dbReference>
<dbReference type="EMBL" id="M57930">
    <property type="protein sequence ID" value="AAA36572.1"/>
    <property type="status" value="JOINED"/>
    <property type="molecule type" value="Genomic_DNA"/>
</dbReference>
<dbReference type="EMBL" id="M57932">
    <property type="protein sequence ID" value="AAA36572.1"/>
    <property type="status" value="JOINED"/>
    <property type="molecule type" value="Genomic_DNA"/>
</dbReference>
<dbReference type="EMBL" id="M57934">
    <property type="protein sequence ID" value="AAA36572.1"/>
    <property type="status" value="JOINED"/>
    <property type="molecule type" value="Genomic_DNA"/>
</dbReference>
<dbReference type="EMBL" id="M57937">
    <property type="protein sequence ID" value="AAA36572.1"/>
    <property type="status" value="JOINED"/>
    <property type="molecule type" value="Genomic_DNA"/>
</dbReference>
<dbReference type="EMBL" id="M57939">
    <property type="protein sequence ID" value="AAA36573.1"/>
    <property type="molecule type" value="Genomic_DNA"/>
</dbReference>
<dbReference type="EMBL" id="M57929">
    <property type="protein sequence ID" value="AAA36573.1"/>
    <property type="status" value="JOINED"/>
    <property type="molecule type" value="Genomic_DNA"/>
</dbReference>
<dbReference type="EMBL" id="M57930">
    <property type="protein sequence ID" value="AAA36573.1"/>
    <property type="status" value="JOINED"/>
    <property type="molecule type" value="Genomic_DNA"/>
</dbReference>
<dbReference type="EMBL" id="M57932">
    <property type="protein sequence ID" value="AAA36573.1"/>
    <property type="status" value="JOINED"/>
    <property type="molecule type" value="Genomic_DNA"/>
</dbReference>
<dbReference type="EMBL" id="M57934">
    <property type="protein sequence ID" value="AAA36573.1"/>
    <property type="status" value="JOINED"/>
    <property type="molecule type" value="Genomic_DNA"/>
</dbReference>
<dbReference type="EMBL" id="M57937">
    <property type="protein sequence ID" value="AAA36573.1"/>
    <property type="status" value="JOINED"/>
    <property type="molecule type" value="Genomic_DNA"/>
</dbReference>
<dbReference type="EMBL" id="M57935">
    <property type="protein sequence ID" value="AAA36571.1"/>
    <property type="molecule type" value="Genomic_DNA"/>
</dbReference>
<dbReference type="EMBL" id="M57929">
    <property type="protein sequence ID" value="AAA36571.1"/>
    <property type="status" value="JOINED"/>
    <property type="molecule type" value="Genomic_DNA"/>
</dbReference>
<dbReference type="EMBL" id="M57930">
    <property type="protein sequence ID" value="AAA36571.1"/>
    <property type="status" value="JOINED"/>
    <property type="molecule type" value="Genomic_DNA"/>
</dbReference>
<dbReference type="EMBL" id="M57932">
    <property type="protein sequence ID" value="AAA36571.1"/>
    <property type="status" value="JOINED"/>
    <property type="molecule type" value="Genomic_DNA"/>
</dbReference>
<dbReference type="EMBL" id="M57934">
    <property type="protein sequence ID" value="AAA36571.1"/>
    <property type="status" value="JOINED"/>
    <property type="molecule type" value="Genomic_DNA"/>
</dbReference>
<dbReference type="EMBL" id="AK096783">
    <property type="protein sequence ID" value="BAG53365.1"/>
    <property type="molecule type" value="mRNA"/>
</dbReference>
<dbReference type="EMBL" id="X84841">
    <property type="protein sequence ID" value="CAA59278.1"/>
    <property type="molecule type" value="mRNA"/>
</dbReference>
<dbReference type="EMBL" id="AL117507">
    <property type="protein sequence ID" value="CAB55969.1"/>
    <property type="molecule type" value="mRNA"/>
</dbReference>
<dbReference type="EMBL" id="CH471177">
    <property type="protein sequence ID" value="EAW52449.1"/>
    <property type="molecule type" value="Genomic_DNA"/>
</dbReference>
<dbReference type="EMBL" id="BC001315">
    <property type="protein sequence ID" value="AAH01315.1"/>
    <property type="molecule type" value="mRNA"/>
</dbReference>
<dbReference type="CCDS" id="CCDS12756.1">
    <molecule id="P08621-1"/>
</dbReference>
<dbReference type="CCDS" id="CCDS74417.1">
    <molecule id="P08621-2"/>
</dbReference>
<dbReference type="PIR" id="A25707">
    <property type="entry name" value="A25707"/>
</dbReference>
<dbReference type="PIR" id="S00674">
    <property type="entry name" value="S00674"/>
</dbReference>
<dbReference type="RefSeq" id="NP_001287998.1">
    <molecule id="P08621-2"/>
    <property type="nucleotide sequence ID" value="NM_001301069.2"/>
</dbReference>
<dbReference type="RefSeq" id="NP_003080.2">
    <molecule id="P08621-1"/>
    <property type="nucleotide sequence ID" value="NM_003089.5"/>
</dbReference>
<dbReference type="PDB" id="2L5I">
    <property type="method" value="NMR"/>
    <property type="chains" value="A=131-151"/>
</dbReference>
<dbReference type="PDB" id="2L5J">
    <property type="method" value="NMR"/>
    <property type="chains" value="A=131-151"/>
</dbReference>
<dbReference type="PDB" id="3CW1">
    <property type="method" value="X-ray"/>
    <property type="resolution" value="5.49 A"/>
    <property type="chains" value="6/7/8/K=1-216"/>
</dbReference>
<dbReference type="PDB" id="3PGW">
    <property type="method" value="X-ray"/>
    <property type="resolution" value="4.40 A"/>
    <property type="chains" value="L/S=1-437"/>
</dbReference>
<dbReference type="PDB" id="4PJO">
    <property type="method" value="X-ray"/>
    <property type="resolution" value="3.30 A"/>
    <property type="chains" value="K/N/k/n=2-60"/>
</dbReference>
<dbReference type="PDB" id="4PKD">
    <property type="method" value="X-ray"/>
    <property type="resolution" value="2.50 A"/>
    <property type="chains" value="B=60-215"/>
</dbReference>
<dbReference type="PDB" id="6QX9">
    <property type="method" value="EM"/>
    <property type="resolution" value="3.28 A"/>
    <property type="chains" value="1K=1-437"/>
</dbReference>
<dbReference type="PDB" id="7B0Y">
    <property type="method" value="EM"/>
    <property type="resolution" value="3.60 A"/>
    <property type="chains" value="b=1-437"/>
</dbReference>
<dbReference type="PDB" id="7VPX">
    <property type="method" value="EM"/>
    <property type="resolution" value="3.00 A"/>
    <property type="chains" value="O=1-437"/>
</dbReference>
<dbReference type="PDB" id="8R08">
    <property type="method" value="EM"/>
    <property type="resolution" value="6.10 A"/>
    <property type="chains" value="1K=1-437"/>
</dbReference>
<dbReference type="PDBsum" id="2L5I"/>
<dbReference type="PDBsum" id="2L5J"/>
<dbReference type="PDBsum" id="3CW1"/>
<dbReference type="PDBsum" id="3PGW"/>
<dbReference type="PDBsum" id="4PJO"/>
<dbReference type="PDBsum" id="4PKD"/>
<dbReference type="PDBsum" id="6QX9"/>
<dbReference type="PDBsum" id="7B0Y"/>
<dbReference type="PDBsum" id="7VPX"/>
<dbReference type="PDBsum" id="8R08"/>
<dbReference type="EMDB" id="EMD-11972"/>
<dbReference type="EMDB" id="EMD-18786"/>
<dbReference type="EMDB" id="EMD-32074"/>
<dbReference type="EMDB" id="EMD-4665"/>
<dbReference type="SMR" id="P08621"/>
<dbReference type="BioGRID" id="112509">
    <property type="interactions" value="1003"/>
</dbReference>
<dbReference type="ComplexPortal" id="CPX-2392">
    <property type="entry name" value="U1 small nuclear ribonucleoprotein complex"/>
</dbReference>
<dbReference type="CORUM" id="P08621"/>
<dbReference type="DIP" id="DIP-29406N"/>
<dbReference type="ELM" id="P08621"/>
<dbReference type="FunCoup" id="P08621">
    <property type="interactions" value="2159"/>
</dbReference>
<dbReference type="IntAct" id="P08621">
    <property type="interactions" value="243"/>
</dbReference>
<dbReference type="MINT" id="P08621"/>
<dbReference type="STRING" id="9606.ENSP00000472998"/>
<dbReference type="MoonDB" id="P08621">
    <property type="type" value="Predicted"/>
</dbReference>
<dbReference type="GlyGen" id="P08621">
    <property type="glycosylation" value="1 site, 1 O-linked glycan (1 site)"/>
</dbReference>
<dbReference type="iPTMnet" id="P08621"/>
<dbReference type="PhosphoSitePlus" id="P08621"/>
<dbReference type="SwissPalm" id="P08621"/>
<dbReference type="BioMuta" id="SNRNP70"/>
<dbReference type="DMDM" id="13635663"/>
<dbReference type="CPTAC" id="CPTAC-1007"/>
<dbReference type="jPOST" id="P08621"/>
<dbReference type="MassIVE" id="P08621"/>
<dbReference type="PaxDb" id="9606-ENSP00000472998"/>
<dbReference type="PeptideAtlas" id="P08621"/>
<dbReference type="ProteomicsDB" id="52138">
    <molecule id="P08621-1"/>
</dbReference>
<dbReference type="ProteomicsDB" id="52139">
    <molecule id="P08621-2"/>
</dbReference>
<dbReference type="ProteomicsDB" id="52140">
    <molecule id="P08621-3"/>
</dbReference>
<dbReference type="ProteomicsDB" id="52141">
    <molecule id="P08621-4"/>
</dbReference>
<dbReference type="Pumba" id="P08621"/>
<dbReference type="Antibodypedia" id="3444">
    <property type="antibodies" value="184 antibodies from 25 providers"/>
</dbReference>
<dbReference type="DNASU" id="6625"/>
<dbReference type="Ensembl" id="ENST00000221448.9">
    <molecule id="P08621-2"/>
    <property type="protein sequence ID" value="ENSP00000221448.5"/>
    <property type="gene ID" value="ENSG00000104852.15"/>
</dbReference>
<dbReference type="Ensembl" id="ENST00000401730.5">
    <molecule id="P08621-3"/>
    <property type="protein sequence ID" value="ENSP00000385077.1"/>
    <property type="gene ID" value="ENSG00000104852.15"/>
</dbReference>
<dbReference type="Ensembl" id="ENST00000595231.5">
    <molecule id="P08621-3"/>
    <property type="protein sequence ID" value="ENSP00000471006.1"/>
    <property type="gene ID" value="ENSG00000104852.15"/>
</dbReference>
<dbReference type="Ensembl" id="ENST00000598441.6">
    <molecule id="P08621-1"/>
    <property type="protein sequence ID" value="ENSP00000472998.1"/>
    <property type="gene ID" value="ENSG00000104852.15"/>
</dbReference>
<dbReference type="Ensembl" id="ENST00000601065.5">
    <molecule id="P08621-3"/>
    <property type="protein sequence ID" value="ENSP00000468952.1"/>
    <property type="gene ID" value="ENSG00000104852.15"/>
</dbReference>
<dbReference type="GeneID" id="6625"/>
<dbReference type="KEGG" id="hsa:6625"/>
<dbReference type="MANE-Select" id="ENST00000598441.6">
    <property type="protein sequence ID" value="ENSP00000472998.1"/>
    <property type="RefSeq nucleotide sequence ID" value="NM_003089.6"/>
    <property type="RefSeq protein sequence ID" value="NP_003080.2"/>
</dbReference>
<dbReference type="UCSC" id="uc002pmk.4">
    <molecule id="P08621-1"/>
    <property type="organism name" value="human"/>
</dbReference>
<dbReference type="AGR" id="HGNC:11150"/>
<dbReference type="CTD" id="6625"/>
<dbReference type="DisGeNET" id="6625"/>
<dbReference type="GeneCards" id="SNRNP70"/>
<dbReference type="HGNC" id="HGNC:11150">
    <property type="gene designation" value="SNRNP70"/>
</dbReference>
<dbReference type="HPA" id="ENSG00000104852">
    <property type="expression patterns" value="Low tissue specificity"/>
</dbReference>
<dbReference type="MIM" id="180740">
    <property type="type" value="gene"/>
</dbReference>
<dbReference type="neXtProt" id="NX_P08621"/>
<dbReference type="OpenTargets" id="ENSG00000104852"/>
<dbReference type="PharmGKB" id="PA35992"/>
<dbReference type="VEuPathDB" id="HostDB:ENSG00000104852"/>
<dbReference type="eggNOG" id="KOG0113">
    <property type="taxonomic scope" value="Eukaryota"/>
</dbReference>
<dbReference type="GeneTree" id="ENSGT00940000160292"/>
<dbReference type="HOGENOM" id="CLU_045151_5_1_1"/>
<dbReference type="InParanoid" id="P08621"/>
<dbReference type="OMA" id="GRTTKGW"/>
<dbReference type="OrthoDB" id="4207594at2759"/>
<dbReference type="PAN-GO" id="P08621">
    <property type="GO annotations" value="5 GO annotations based on evolutionary models"/>
</dbReference>
<dbReference type="PhylomeDB" id="P08621"/>
<dbReference type="TreeFam" id="TF314215"/>
<dbReference type="PathwayCommons" id="P08621"/>
<dbReference type="Reactome" id="R-HSA-72163">
    <property type="pathway name" value="mRNA Splicing - Major Pathway"/>
</dbReference>
<dbReference type="SignaLink" id="P08621"/>
<dbReference type="SIGNOR" id="P08621"/>
<dbReference type="BioGRID-ORCS" id="6625">
    <property type="hits" value="812 hits in 1179 CRISPR screens"/>
</dbReference>
<dbReference type="CD-CODE" id="462A97B5">
    <property type="entry name" value="Leucocyte nuclear body"/>
</dbReference>
<dbReference type="CD-CODE" id="6F24707C">
    <property type="entry name" value="Cajal body"/>
</dbReference>
<dbReference type="CD-CODE" id="804901D1">
    <property type="entry name" value="Nuclear speckle"/>
</dbReference>
<dbReference type="CD-CODE" id="91857CE7">
    <property type="entry name" value="Nucleolus"/>
</dbReference>
<dbReference type="ChiTaRS" id="SNRNP70">
    <property type="organism name" value="human"/>
</dbReference>
<dbReference type="EvolutionaryTrace" id="P08621"/>
<dbReference type="GeneWiki" id="SnRNP70"/>
<dbReference type="GenomeRNAi" id="6625"/>
<dbReference type="Pharos" id="P08621">
    <property type="development level" value="Tbio"/>
</dbReference>
<dbReference type="PRO" id="PR:P08621"/>
<dbReference type="Proteomes" id="UP000005640">
    <property type="component" value="Chromosome 19"/>
</dbReference>
<dbReference type="RNAct" id="P08621">
    <property type="molecule type" value="protein"/>
</dbReference>
<dbReference type="Bgee" id="ENSG00000104852">
    <property type="expression patterns" value="Expressed in right hemisphere of cerebellum and 205 other cell types or tissues"/>
</dbReference>
<dbReference type="ExpressionAtlas" id="P08621">
    <property type="expression patterns" value="baseline and differential"/>
</dbReference>
<dbReference type="GO" id="GO:0016607">
    <property type="term" value="C:nuclear speck"/>
    <property type="evidence" value="ECO:0000250"/>
    <property type="project" value="UniProtKB"/>
</dbReference>
<dbReference type="GO" id="GO:0005654">
    <property type="term" value="C:nucleoplasm"/>
    <property type="evidence" value="ECO:0000314"/>
    <property type="project" value="HPA"/>
</dbReference>
<dbReference type="GO" id="GO:0005634">
    <property type="term" value="C:nucleus"/>
    <property type="evidence" value="ECO:0000314"/>
    <property type="project" value="UniProtKB"/>
</dbReference>
<dbReference type="GO" id="GO:0005681">
    <property type="term" value="C:spliceosomal complex"/>
    <property type="evidence" value="ECO:0000314"/>
    <property type="project" value="UniProtKB"/>
</dbReference>
<dbReference type="GO" id="GO:0005685">
    <property type="term" value="C:U1 snRNP"/>
    <property type="evidence" value="ECO:0000314"/>
    <property type="project" value="UniProtKB"/>
</dbReference>
<dbReference type="GO" id="GO:0071004">
    <property type="term" value="C:U2-type prespliceosome"/>
    <property type="evidence" value="ECO:0000318"/>
    <property type="project" value="GO_Central"/>
</dbReference>
<dbReference type="GO" id="GO:0003729">
    <property type="term" value="F:mRNA binding"/>
    <property type="evidence" value="ECO:0000318"/>
    <property type="project" value="GO_Central"/>
</dbReference>
<dbReference type="GO" id="GO:0003723">
    <property type="term" value="F:RNA binding"/>
    <property type="evidence" value="ECO:0000315"/>
    <property type="project" value="UniProtKB"/>
</dbReference>
<dbReference type="GO" id="GO:0030619">
    <property type="term" value="F:U1 snRNA binding"/>
    <property type="evidence" value="ECO:0000314"/>
    <property type="project" value="UniProtKB"/>
</dbReference>
<dbReference type="GO" id="GO:1990446">
    <property type="term" value="F:U1 snRNP binding"/>
    <property type="evidence" value="ECO:0007669"/>
    <property type="project" value="Ensembl"/>
</dbReference>
<dbReference type="GO" id="GO:0071300">
    <property type="term" value="P:cellular response to retinoic acid"/>
    <property type="evidence" value="ECO:0007669"/>
    <property type="project" value="Ensembl"/>
</dbReference>
<dbReference type="GO" id="GO:0071560">
    <property type="term" value="P:cellular response to transforming growth factor beta stimulus"/>
    <property type="evidence" value="ECO:0007669"/>
    <property type="project" value="Ensembl"/>
</dbReference>
<dbReference type="GO" id="GO:0071356">
    <property type="term" value="P:cellular response to tumor necrosis factor"/>
    <property type="evidence" value="ECO:0007669"/>
    <property type="project" value="Ensembl"/>
</dbReference>
<dbReference type="GO" id="GO:0000398">
    <property type="term" value="P:mRNA splicing, via spliceosome"/>
    <property type="evidence" value="ECO:0000314"/>
    <property type="project" value="UniProtKB"/>
</dbReference>
<dbReference type="GO" id="GO:1904715">
    <property type="term" value="P:negative regulation of chaperone-mediated autophagy"/>
    <property type="evidence" value="ECO:0000304"/>
    <property type="project" value="ParkinsonsUK-UCL"/>
</dbReference>
<dbReference type="GO" id="GO:0061084">
    <property type="term" value="P:negative regulation of protein refolding"/>
    <property type="evidence" value="ECO:0000304"/>
    <property type="project" value="ParkinsonsUK-UCL"/>
</dbReference>
<dbReference type="GO" id="GO:0048026">
    <property type="term" value="P:positive regulation of mRNA splicing, via spliceosome"/>
    <property type="evidence" value="ECO:0007669"/>
    <property type="project" value="Ensembl"/>
</dbReference>
<dbReference type="GO" id="GO:0043462">
    <property type="term" value="P:regulation of ATP-dependent activity"/>
    <property type="evidence" value="ECO:0000304"/>
    <property type="project" value="ParkinsonsUK-UCL"/>
</dbReference>
<dbReference type="GO" id="GO:0043484">
    <property type="term" value="P:regulation of RNA splicing"/>
    <property type="evidence" value="ECO:0000315"/>
    <property type="project" value="UniProtKB"/>
</dbReference>
<dbReference type="CDD" id="cd12236">
    <property type="entry name" value="RRM_snRNP70"/>
    <property type="match status" value="1"/>
</dbReference>
<dbReference type="DisProt" id="DP02171"/>
<dbReference type="FunFam" id="3.30.70.330:FF:001585">
    <property type="entry name" value="U1 small nuclear ribonucleoprotein 70 kDa"/>
    <property type="match status" value="1"/>
</dbReference>
<dbReference type="Gene3D" id="3.30.70.330">
    <property type="match status" value="1"/>
</dbReference>
<dbReference type="IDEAL" id="IID00138"/>
<dbReference type="InterPro" id="IPR012677">
    <property type="entry name" value="Nucleotide-bd_a/b_plait_sf"/>
</dbReference>
<dbReference type="InterPro" id="IPR035979">
    <property type="entry name" value="RBD_domain_sf"/>
</dbReference>
<dbReference type="InterPro" id="IPR000504">
    <property type="entry name" value="RRM_dom"/>
</dbReference>
<dbReference type="InterPro" id="IPR034143">
    <property type="entry name" value="snRNP70_RRM"/>
</dbReference>
<dbReference type="InterPro" id="IPR051183">
    <property type="entry name" value="U1_U11-U12_snRNP_70-35kDa"/>
</dbReference>
<dbReference type="InterPro" id="IPR022023">
    <property type="entry name" value="U1snRNP70_N"/>
</dbReference>
<dbReference type="PANTHER" id="PTHR13952">
    <property type="entry name" value="U1 SMALL NUCLEAR RIBONUCLEOPROTEIN 70 KD"/>
    <property type="match status" value="1"/>
</dbReference>
<dbReference type="PANTHER" id="PTHR13952:SF5">
    <property type="entry name" value="U1 SMALL NUCLEAR RIBONUCLEOPROTEIN 70 KDA"/>
    <property type="match status" value="1"/>
</dbReference>
<dbReference type="Pfam" id="PF00076">
    <property type="entry name" value="RRM_1"/>
    <property type="match status" value="1"/>
</dbReference>
<dbReference type="Pfam" id="PF12220">
    <property type="entry name" value="U1snRNP70_N"/>
    <property type="match status" value="1"/>
</dbReference>
<dbReference type="SMART" id="SM00360">
    <property type="entry name" value="RRM"/>
    <property type="match status" value="1"/>
</dbReference>
<dbReference type="SUPFAM" id="SSF54928">
    <property type="entry name" value="RNA-binding domain, RBD"/>
    <property type="match status" value="1"/>
</dbReference>
<dbReference type="PROSITE" id="PS50102">
    <property type="entry name" value="RRM"/>
    <property type="match status" value="1"/>
</dbReference>
<feature type="initiator methionine" description="Removed" evidence="35 40">
    <location>
        <position position="1"/>
    </location>
</feature>
<feature type="chain" id="PRO_0000081880" description="U1 small nuclear ribonucleoprotein 70 kDa">
    <location>
        <begin position="2"/>
        <end position="437"/>
    </location>
</feature>
<feature type="domain" description="RRM" evidence="2">
    <location>
        <begin position="103"/>
        <end position="181"/>
    </location>
</feature>
<feature type="region of interest" description="Disordered" evidence="3">
    <location>
        <begin position="48"/>
        <end position="79"/>
    </location>
</feature>
<feature type="region of interest" description="Required for interaction with U1 RNA" evidence="12">
    <location>
        <begin position="92"/>
        <end position="202"/>
    </location>
</feature>
<feature type="region of interest" description="Disordered" evidence="3">
    <location>
        <begin position="187"/>
        <end position="437"/>
    </location>
</feature>
<feature type="compositionally biased region" description="Basic and acidic residues" evidence="3">
    <location>
        <begin position="60"/>
        <end position="79"/>
    </location>
</feature>
<feature type="compositionally biased region" description="Gly residues" evidence="3">
    <location>
        <begin position="192"/>
        <end position="201"/>
    </location>
</feature>
<feature type="compositionally biased region" description="Basic and acidic residues" evidence="3">
    <location>
        <begin position="207"/>
        <end position="254"/>
    </location>
</feature>
<feature type="compositionally biased region" description="Basic residues" evidence="3">
    <location>
        <begin position="255"/>
        <end position="268"/>
    </location>
</feature>
<feature type="compositionally biased region" description="Basic and acidic residues" evidence="3">
    <location>
        <begin position="269"/>
        <end position="286"/>
    </location>
</feature>
<feature type="compositionally biased region" description="Basic and acidic residues" evidence="3">
    <location>
        <begin position="294"/>
        <end position="310"/>
    </location>
</feature>
<feature type="compositionally biased region" description="Basic and acidic residues" evidence="3">
    <location>
        <begin position="343"/>
        <end position="393"/>
    </location>
</feature>
<feature type="modified residue" description="N-acetylthreonine" evidence="35 40">
    <location>
        <position position="2"/>
    </location>
</feature>
<feature type="modified residue" description="N6-acetyllysine" evidence="36">
    <location>
        <position position="118"/>
    </location>
</feature>
<feature type="modified residue" description="Phosphotyrosine" evidence="41">
    <location>
        <position position="126"/>
    </location>
</feature>
<feature type="modified residue" description="Phosphoserine" evidence="28 30 31 32 34 38 39 41 42">
    <location>
        <position position="226"/>
    </location>
</feature>
<feature type="modified residue" description="Phosphoserine" evidence="38">
    <location>
        <position position="268"/>
    </location>
</feature>
<feature type="modified residue" description="Phosphoserine" evidence="30 37 38 39 41 42">
    <location>
        <position position="320"/>
    </location>
</feature>
<feature type="modified residue" description="Phosphoserine" evidence="29 30 33 37 38 39 41">
    <location>
        <position position="410"/>
    </location>
</feature>
<feature type="cross-link" description="Glycyl lysine isopeptide (Lys-Gly) (interchain with G-Cter in SUMO2)" evidence="43">
    <location>
        <position position="346"/>
    </location>
</feature>
<feature type="splice variant" id="VSP_005847" description="In isoform 4." evidence="20">
    <original>MTQFLPPNLLALFAPRDPIPYLPPLEKLPHEKHHNQPYCGIAPYIREFEDPRDAPPPTRAETREERMERKRREKIERRQQEVETELKMWDPHNDPNAQGDAFKTLFVARVNYDTTESKLRREFEVYGPIKRIHMVYSKRSGKPRGYAFIEYEHERDMHS</original>
    <variation>MEQALHRFGRGLVWLSVAWLSVGRVRVRDDGDTGRGFCRAGPVLTRGPSGDSSPLPLPTSVTA</variation>
    <location>
        <begin position="1"/>
        <end position="159"/>
    </location>
</feature>
<feature type="splice variant" id="VSP_005848" description="In isoform 3." evidence="19">
    <original>AYKHADG</original>
    <variation>TTQLACS</variation>
    <location>
        <begin position="160"/>
        <end position="166"/>
    </location>
</feature>
<feature type="splice variant" id="VSP_005849" description="In isoform 3." evidence="19">
    <location>
        <begin position="167"/>
        <end position="437"/>
    </location>
</feature>
<feature type="splice variant" id="VSP_005850" description="In isoform 2." evidence="24">
    <location>
        <begin position="223"/>
        <end position="231"/>
    </location>
</feature>
<feature type="helix" evidence="45">
    <location>
        <begin position="7"/>
        <end position="10"/>
    </location>
</feature>
<feature type="helix" evidence="45">
    <location>
        <begin position="29"/>
        <end position="31"/>
    </location>
</feature>
<feature type="helix" evidence="45">
    <location>
        <begin position="42"/>
        <end position="44"/>
    </location>
</feature>
<feature type="helix" evidence="45">
    <location>
        <begin position="50"/>
        <end position="52"/>
    </location>
</feature>
<feature type="helix" evidence="44">
    <location>
        <begin position="63"/>
        <end position="86"/>
    </location>
</feature>
<feature type="helix" evidence="44">
    <location>
        <begin position="91"/>
        <end position="93"/>
    </location>
</feature>
<feature type="helix" evidence="44">
    <location>
        <begin position="101"/>
        <end position="103"/>
    </location>
</feature>
<feature type="strand" evidence="44">
    <location>
        <begin position="104"/>
        <end position="109"/>
    </location>
</feature>
<feature type="helix" evidence="44">
    <location>
        <begin position="116"/>
        <end position="124"/>
    </location>
</feature>
<feature type="strand" evidence="44">
    <location>
        <begin position="129"/>
        <end position="136"/>
    </location>
</feature>
<feature type="turn" evidence="44">
    <location>
        <begin position="138"/>
        <end position="140"/>
    </location>
</feature>
<feature type="strand" evidence="44">
    <location>
        <begin position="143"/>
        <end position="153"/>
    </location>
</feature>
<feature type="helix" evidence="44">
    <location>
        <begin position="154"/>
        <end position="163"/>
    </location>
</feature>
<feature type="strand" evidence="44">
    <location>
        <begin position="175"/>
        <end position="178"/>
    </location>
</feature>
<feature type="turn" evidence="44">
    <location>
        <begin position="181"/>
        <end position="183"/>
    </location>
</feature>
<feature type="helix" evidence="44">
    <location>
        <begin position="190"/>
        <end position="192"/>
    </location>
</feature>
<sequence length="437" mass="51557">MTQFLPPNLLALFAPRDPIPYLPPLEKLPHEKHHNQPYCGIAPYIREFEDPRDAPPPTRAETREERMERKRREKIERRQQEVETELKMWDPHNDPNAQGDAFKTLFVARVNYDTTESKLRREFEVYGPIKRIHMVYSKRSGKPRGYAFIEYEHERDMHSAYKHADGKKIDGRRVLVDVERGRTVKGWRPRRLGGGLGGTRRGGADVNIRHSGRDDTSRYDERPGPSPLPHRDRDRDRERERRERSRERDKERERRRSRSRDRRRRSRSRDKEERRRSRERSKDKDRDRKRRSSRSRERARRERERKEELRGGGGDMAEPSEAGDAPPDDGPPGELGPDGPDGPEEKGRDRDRERRRSHRSERERRRDRDRDRDRDREHKRGERGSERGRDEARGGGGGQDNGLEGLGNDSRDMYMESEGGDGYLAPENGYLMEAAPE</sequence>
<reference key="1">
    <citation type="journal article" date="1986" name="EMBO J.">
        <title>Cloning of the human cDNA for the U1 RNA-associated 70K protein.</title>
        <authorList>
            <person name="Theissen H."/>
            <person name="Etzerodt M."/>
            <person name="Reuter R."/>
            <person name="Schneider C."/>
            <person name="Lottspeich F."/>
            <person name="Argos P."/>
            <person name="Luehrmann R."/>
            <person name="Philipson L."/>
        </authorList>
    </citation>
    <scope>NUCLEOTIDE SEQUENCE [MRNA] (ISOFORM 1)</scope>
</reference>
<reference key="2">
    <citation type="journal article" date="1987" name="Nucleic Acids Res.">
        <title>The human U1-70K snRNP protein: cDNA cloning, chromosomal localization, expression, alternative splicing and RNA-binding.</title>
        <authorList>
            <person name="Spritz R.A."/>
            <person name="Strunk K."/>
            <person name="Surowy C.S."/>
            <person name="Hoch S.O."/>
            <person name="Barton D.E."/>
            <person name="Francke U."/>
        </authorList>
    </citation>
    <scope>NUCLEOTIDE SEQUENCE [MRNA]</scope>
    <scope>ALTERNATIVE SPLICING</scope>
</reference>
<reference key="3">
    <citation type="journal article" date="1989" name="Cell">
        <title>A common RNA recognition motif identified within a defined U1 RNA binding domain of the 70K U1 snRNP protein.</title>
        <authorList>
            <person name="Query C.C."/>
            <person name="Bentley R.C."/>
            <person name="Keene J.D."/>
        </authorList>
    </citation>
    <scope>NUCLEOTIDE SEQUENCE [MRNA] (ISOFORM 1)</scope>
    <scope>RNA-BINDING DOMAIN</scope>
    <scope>FUNCTION</scope>
</reference>
<reference key="4">
    <citation type="journal article" date="1990" name="Genomics">
        <title>Human U1-70K ribonucleoprotein antigen gene: organization, nucleotide sequence, and mapping to locus 19q13.3.</title>
        <authorList>
            <person name="Spritz R.A."/>
            <person name="Strunk K."/>
            <person name="Surowy C.S."/>
            <person name="Mohrenweiser H.W."/>
        </authorList>
    </citation>
    <scope>NUCLEOTIDE SEQUENCE [GENOMIC DNA] (ISOFORMS 1 AND 2)</scope>
</reference>
<reference key="5">
    <citation type="journal article" date="1995" name="Protein Expr. Purif.">
        <title>Identification of an inhibitory element within the human 68-kDa (U1) ribonucleoprotein antigen.</title>
        <authorList>
            <person name="Northemann W."/>
            <person name="Berg H."/>
            <person name="Stahnke G."/>
            <person name="Walter M."/>
            <person name="Hunt N."/>
            <person name="Fenning S."/>
        </authorList>
    </citation>
    <scope>NUCLEOTIDE SEQUENCE [MRNA] (ISOFORM 1)</scope>
    <source>
        <tissue>Liver</tissue>
    </source>
</reference>
<reference key="6">
    <citation type="journal article" date="2004" name="Nat. Genet.">
        <title>Complete sequencing and characterization of 21,243 full-length human cDNAs.</title>
        <authorList>
            <person name="Ota T."/>
            <person name="Suzuki Y."/>
            <person name="Nishikawa T."/>
            <person name="Otsuki T."/>
            <person name="Sugiyama T."/>
            <person name="Irie R."/>
            <person name="Wakamatsu A."/>
            <person name="Hayashi K."/>
            <person name="Sato H."/>
            <person name="Nagai K."/>
            <person name="Kimura K."/>
            <person name="Makita H."/>
            <person name="Sekine M."/>
            <person name="Obayashi M."/>
            <person name="Nishi T."/>
            <person name="Shibahara T."/>
            <person name="Tanaka T."/>
            <person name="Ishii S."/>
            <person name="Yamamoto J."/>
            <person name="Saito K."/>
            <person name="Kawai Y."/>
            <person name="Isono Y."/>
            <person name="Nakamura Y."/>
            <person name="Nagahari K."/>
            <person name="Murakami K."/>
            <person name="Yasuda T."/>
            <person name="Iwayanagi T."/>
            <person name="Wagatsuma M."/>
            <person name="Shiratori A."/>
            <person name="Sudo H."/>
            <person name="Hosoiri T."/>
            <person name="Kaku Y."/>
            <person name="Kodaira H."/>
            <person name="Kondo H."/>
            <person name="Sugawara M."/>
            <person name="Takahashi M."/>
            <person name="Kanda K."/>
            <person name="Yokoi T."/>
            <person name="Furuya T."/>
            <person name="Kikkawa E."/>
            <person name="Omura Y."/>
            <person name="Abe K."/>
            <person name="Kamihara K."/>
            <person name="Katsuta N."/>
            <person name="Sato K."/>
            <person name="Tanikawa M."/>
            <person name="Yamazaki M."/>
            <person name="Ninomiya K."/>
            <person name="Ishibashi T."/>
            <person name="Yamashita H."/>
            <person name="Murakawa K."/>
            <person name="Fujimori K."/>
            <person name="Tanai H."/>
            <person name="Kimata M."/>
            <person name="Watanabe M."/>
            <person name="Hiraoka S."/>
            <person name="Chiba Y."/>
            <person name="Ishida S."/>
            <person name="Ono Y."/>
            <person name="Takiguchi S."/>
            <person name="Watanabe S."/>
            <person name="Yosida M."/>
            <person name="Hotuta T."/>
            <person name="Kusano J."/>
            <person name="Kanehori K."/>
            <person name="Takahashi-Fujii A."/>
            <person name="Hara H."/>
            <person name="Tanase T.-O."/>
            <person name="Nomura Y."/>
            <person name="Togiya S."/>
            <person name="Komai F."/>
            <person name="Hara R."/>
            <person name="Takeuchi K."/>
            <person name="Arita M."/>
            <person name="Imose N."/>
            <person name="Musashino K."/>
            <person name="Yuuki H."/>
            <person name="Oshima A."/>
            <person name="Sasaki N."/>
            <person name="Aotsuka S."/>
            <person name="Yoshikawa Y."/>
            <person name="Matsunawa H."/>
            <person name="Ichihara T."/>
            <person name="Shiohata N."/>
            <person name="Sano S."/>
            <person name="Moriya S."/>
            <person name="Momiyama H."/>
            <person name="Satoh N."/>
            <person name="Takami S."/>
            <person name="Terashima Y."/>
            <person name="Suzuki O."/>
            <person name="Nakagawa S."/>
            <person name="Senoh A."/>
            <person name="Mizoguchi H."/>
            <person name="Goto Y."/>
            <person name="Shimizu F."/>
            <person name="Wakebe H."/>
            <person name="Hishigaki H."/>
            <person name="Watanabe T."/>
            <person name="Sugiyama A."/>
            <person name="Takemoto M."/>
            <person name="Kawakami B."/>
            <person name="Yamazaki M."/>
            <person name="Watanabe K."/>
            <person name="Kumagai A."/>
            <person name="Itakura S."/>
            <person name="Fukuzumi Y."/>
            <person name="Fujimori Y."/>
            <person name="Komiyama M."/>
            <person name="Tashiro H."/>
            <person name="Tanigami A."/>
            <person name="Fujiwara T."/>
            <person name="Ono T."/>
            <person name="Yamada K."/>
            <person name="Fujii Y."/>
            <person name="Ozaki K."/>
            <person name="Hirao M."/>
            <person name="Ohmori Y."/>
            <person name="Kawabata A."/>
            <person name="Hikiji T."/>
            <person name="Kobatake N."/>
            <person name="Inagaki H."/>
            <person name="Ikema Y."/>
            <person name="Okamoto S."/>
            <person name="Okitani R."/>
            <person name="Kawakami T."/>
            <person name="Noguchi S."/>
            <person name="Itoh T."/>
            <person name="Shigeta K."/>
            <person name="Senba T."/>
            <person name="Matsumura K."/>
            <person name="Nakajima Y."/>
            <person name="Mizuno T."/>
            <person name="Morinaga M."/>
            <person name="Sasaki M."/>
            <person name="Togashi T."/>
            <person name="Oyama M."/>
            <person name="Hata H."/>
            <person name="Watanabe M."/>
            <person name="Komatsu T."/>
            <person name="Mizushima-Sugano J."/>
            <person name="Satoh T."/>
            <person name="Shirai Y."/>
            <person name="Takahashi Y."/>
            <person name="Nakagawa K."/>
            <person name="Okumura K."/>
            <person name="Nagase T."/>
            <person name="Nomura N."/>
            <person name="Kikuchi H."/>
            <person name="Masuho Y."/>
            <person name="Yamashita R."/>
            <person name="Nakai K."/>
            <person name="Yada T."/>
            <person name="Nakamura Y."/>
            <person name="Ohara O."/>
            <person name="Isogai T."/>
            <person name="Sugano S."/>
        </authorList>
    </citation>
    <scope>NUCLEOTIDE SEQUENCE [LARGE SCALE MRNA] (ISOFORM 3)</scope>
    <source>
        <tissue>Prostate</tissue>
    </source>
</reference>
<reference key="7">
    <citation type="journal article" date="2007" name="BMC Genomics">
        <title>The full-ORF clone resource of the German cDNA consortium.</title>
        <authorList>
            <person name="Bechtel S."/>
            <person name="Rosenfelder H."/>
            <person name="Duda A."/>
            <person name="Schmidt C.P."/>
            <person name="Ernst U."/>
            <person name="Wellenreuther R."/>
            <person name="Mehrle A."/>
            <person name="Schuster C."/>
            <person name="Bahr A."/>
            <person name="Bloecker H."/>
            <person name="Heubner D."/>
            <person name="Hoerlein A."/>
            <person name="Michel G."/>
            <person name="Wedler H."/>
            <person name="Koehrer K."/>
            <person name="Ottenwaelder B."/>
            <person name="Poustka A."/>
            <person name="Wiemann S."/>
            <person name="Schupp I."/>
        </authorList>
    </citation>
    <scope>NUCLEOTIDE SEQUENCE [LARGE SCALE MRNA] (ISOFORM 4)</scope>
    <source>
        <tissue>Testis</tissue>
    </source>
</reference>
<reference key="8">
    <citation type="submission" date="2005-07" db="EMBL/GenBank/DDBJ databases">
        <authorList>
            <person name="Mural R.J."/>
            <person name="Istrail S."/>
            <person name="Sutton G.G."/>
            <person name="Florea L."/>
            <person name="Halpern A.L."/>
            <person name="Mobarry C.M."/>
            <person name="Lippert R."/>
            <person name="Walenz B."/>
            <person name="Shatkay H."/>
            <person name="Dew I."/>
            <person name="Miller J.R."/>
            <person name="Flanigan M.J."/>
            <person name="Edwards N.J."/>
            <person name="Bolanos R."/>
            <person name="Fasulo D."/>
            <person name="Halldorsson B.V."/>
            <person name="Hannenhalli S."/>
            <person name="Turner R."/>
            <person name="Yooseph S."/>
            <person name="Lu F."/>
            <person name="Nusskern D.R."/>
            <person name="Shue B.C."/>
            <person name="Zheng X.H."/>
            <person name="Zhong F."/>
            <person name="Delcher A.L."/>
            <person name="Huson D.H."/>
            <person name="Kravitz S.A."/>
            <person name="Mouchard L."/>
            <person name="Reinert K."/>
            <person name="Remington K.A."/>
            <person name="Clark A.G."/>
            <person name="Waterman M.S."/>
            <person name="Eichler E.E."/>
            <person name="Adams M.D."/>
            <person name="Hunkapiller M.W."/>
            <person name="Myers E.W."/>
            <person name="Venter J.C."/>
        </authorList>
    </citation>
    <scope>NUCLEOTIDE SEQUENCE [LARGE SCALE GENOMIC DNA]</scope>
</reference>
<reference key="9">
    <citation type="journal article" date="2004" name="Genome Res.">
        <title>The status, quality, and expansion of the NIH full-length cDNA project: the Mammalian Gene Collection (MGC).</title>
        <authorList>
            <consortium name="The MGC Project Team"/>
        </authorList>
    </citation>
    <scope>NUCLEOTIDE SEQUENCE [LARGE SCALE MRNA] (ISOFORM 1)</scope>
    <source>
        <tissue>Placenta</tissue>
    </source>
</reference>
<reference key="10">
    <citation type="journal article" date="1993" name="Nucleic Acids Res.">
        <title>Identification of an snRNP-associated kinase activity that phosphorylates arginine/serine rich domains typical of splicing factors.</title>
        <authorList>
            <person name="Woppmann A."/>
            <person name="Will C.L."/>
            <person name="Kornstaedt U."/>
            <person name="Zuo P."/>
            <person name="Manley J.L."/>
            <person name="Luehrmann R."/>
        </authorList>
    </citation>
    <scope>PROTEIN SEQUENCE OF 219-348</scope>
    <scope>PHOSPHORYLATION</scope>
</reference>
<reference key="11">
    <citation type="journal article" date="1998" name="Genes Dev.">
        <title>A coactivator of pre-mRNA splicing.</title>
        <authorList>
            <person name="Blencowe B.J."/>
            <person name="Issner R."/>
            <person name="Nickerson J.A."/>
            <person name="Sharp P.A."/>
        </authorList>
    </citation>
    <scope>IDENTIFICATION IN A MRNA SPLICING COMPLEX WITH SFRS4; SFRS5; SNRPA1; SRRM1 AND SRRM2</scope>
</reference>
<reference key="12">
    <citation type="journal article" date="1998" name="Mol. Cell. Biol.">
        <title>Sip1, a novel RS domain-containing protein essential for pre-mRNA splicing.</title>
        <authorList>
            <person name="Zhang W.-J."/>
            <person name="Wu J.Y."/>
        </authorList>
    </citation>
    <scope>INTERACTION WITH SCAF11</scope>
</reference>
<reference key="13">
    <citation type="journal article" date="1999" name="Proc. Natl. Acad. Sci. U.S.A.">
        <title>The SRm160/300 splicing coactivator is required for exon-enhancer function.</title>
        <authorList>
            <person name="Eldridge A.G."/>
            <person name="Li Y."/>
            <person name="Sharp P.A."/>
            <person name="Blencowe B.J."/>
        </authorList>
    </citation>
    <scope>IDENTIFICATION IN A MRNA EXONIC SPLICING ENHANCER (ESE) COMPLEX WITH SNRPA1; SRRM1 AND TRA2B</scope>
</reference>
<reference key="14">
    <citation type="journal article" date="2001" name="J. Cell Biol.">
        <title>ZNF265 -- a novel spliceosomal protein able to induce alternative splicing.</title>
        <authorList>
            <person name="Adams D.J."/>
            <person name="van der Weyden L."/>
            <person name="Mayeda A."/>
            <person name="Stamm S."/>
            <person name="Morris B.J."/>
            <person name="Rasko J.E.J."/>
        </authorList>
    </citation>
    <scope>INTERACTION WITH ZRANB2</scope>
</reference>
<reference key="15">
    <citation type="journal article" date="2001" name="Mol. Biol. Cell">
        <title>Nuclear relocalization of the pre-mRNA splicing factor PSF during apoptosis involves hyperphosphorylation, masking of antigenic epitopes, and changes in protein interactions.</title>
        <authorList>
            <person name="Shav-Tal Y."/>
            <person name="Cohen M."/>
            <person name="Lapter S."/>
            <person name="Dye B."/>
            <person name="Patton J.G."/>
            <person name="Vandekerckhove J."/>
            <person name="Zipori D."/>
        </authorList>
    </citation>
    <scope>INTERACTION WITH SFPQ</scope>
</reference>
<reference key="16">
    <citation type="journal article" date="2003" name="RNA">
        <title>Association of polyadenylation cleavage factor I with U1 snRNP.</title>
        <authorList>
            <person name="Awasthi S."/>
            <person name="Alwine J.C."/>
        </authorList>
    </citation>
    <scope>INTERACTION WITH NUDT21/CPSF5 AND CPSF6</scope>
</reference>
<reference key="17">
    <citation type="journal article" date="2004" name="Anal. Chem.">
        <title>Robust phosphoproteomic profiling of tyrosine phosphorylation sites from human T cells using immobilized metal affinity chromatography and tandem mass spectrometry.</title>
        <authorList>
            <person name="Brill L.M."/>
            <person name="Salomon A.R."/>
            <person name="Ficarro S.B."/>
            <person name="Mukherji M."/>
            <person name="Stettler-Gill M."/>
            <person name="Peters E.C."/>
        </authorList>
    </citation>
    <scope>PHOSPHORYLATION [LARGE SCALE ANALYSIS] AT SER-226</scope>
    <scope>IDENTIFICATION BY MASS SPECTROMETRY [LARGE SCALE ANALYSIS]</scope>
    <source>
        <tissue>Leukemic T-cell</tissue>
    </source>
</reference>
<reference key="18">
    <citation type="journal article" date="2004" name="Nature">
        <title>Dephosphorylated SRp38 acts as a splicing repressor in response to heat shock.</title>
        <authorList>
            <person name="Shin C."/>
            <person name="Feng Y."/>
            <person name="Manley J.L."/>
        </authorList>
    </citation>
    <scope>INTERACTION WITH SFRS13A</scope>
</reference>
<reference key="19">
    <citation type="journal article" date="2006" name="Cell">
        <title>Global, in vivo, and site-specific phosphorylation dynamics in signaling networks.</title>
        <authorList>
            <person name="Olsen J.V."/>
            <person name="Blagoev B."/>
            <person name="Gnad F."/>
            <person name="Macek B."/>
            <person name="Kumar C."/>
            <person name="Mortensen P."/>
            <person name="Mann M."/>
        </authorList>
    </citation>
    <scope>PHOSPHORYLATION [LARGE SCALE ANALYSIS] AT SER-226; SER-320 AND SER-410</scope>
    <scope>IDENTIFICATION BY MASS SPECTROMETRY [LARGE SCALE ANALYSIS]</scope>
    <source>
        <tissue>Cervix carcinoma</tissue>
    </source>
</reference>
<reference key="20">
    <citation type="journal article" date="2006" name="Nat. Biotechnol.">
        <title>A probability-based approach for high-throughput protein phosphorylation analysis and site localization.</title>
        <authorList>
            <person name="Beausoleil S.A."/>
            <person name="Villen J."/>
            <person name="Gerber S.A."/>
            <person name="Rush J."/>
            <person name="Gygi S.P."/>
        </authorList>
    </citation>
    <scope>PHOSPHORYLATION [LARGE SCALE ANALYSIS] AT SER-410</scope>
    <scope>IDENTIFICATION BY MASS SPECTROMETRY [LARGE SCALE ANALYSIS]</scope>
    <source>
        <tissue>Cervix carcinoma</tissue>
    </source>
</reference>
<reference key="21">
    <citation type="journal article" date="2007" name="Hum. Mol. Genet.">
        <title>Evidence for a direct role of the disease modifier SCNM1 in splicing.</title>
        <authorList>
            <person name="Howell V.M."/>
            <person name="Jones J.M."/>
            <person name="Bergren S.K."/>
            <person name="Li L."/>
            <person name="Billi A.C."/>
            <person name="Avenarius M.R."/>
            <person name="Meisler M.H."/>
        </authorList>
    </citation>
    <scope>SUBCELLULAR LOCATION</scope>
</reference>
<reference key="22">
    <citation type="journal article" date="2007" name="J. Proteome Res.">
        <title>Improved titanium dioxide enrichment of phosphopeptides from HeLa cells and high confident phosphopeptide identification by cross-validation of MS/MS and MS/MS/MS spectra.</title>
        <authorList>
            <person name="Yu L.R."/>
            <person name="Zhu Z."/>
            <person name="Chan K.C."/>
            <person name="Issaq H.J."/>
            <person name="Dimitrov D.S."/>
            <person name="Veenstra T.D."/>
        </authorList>
    </citation>
    <scope>PHOSPHORYLATION [LARGE SCALE ANALYSIS] AT SER-226</scope>
    <scope>IDENTIFICATION BY MASS SPECTROMETRY [LARGE SCALE ANALYSIS]</scope>
    <source>
        <tissue>Cervix carcinoma</tissue>
    </source>
</reference>
<reference key="23">
    <citation type="journal article" date="2008" name="Mol. Cell">
        <title>Kinase-selective enrichment enables quantitative phosphoproteomics of the kinome across the cell cycle.</title>
        <authorList>
            <person name="Daub H."/>
            <person name="Olsen J.V."/>
            <person name="Bairlein M."/>
            <person name="Gnad F."/>
            <person name="Oppermann F.S."/>
            <person name="Korner R."/>
            <person name="Greff Z."/>
            <person name="Keri G."/>
            <person name="Stemmann O."/>
            <person name="Mann M."/>
        </authorList>
    </citation>
    <scope>PHOSPHORYLATION [LARGE SCALE ANALYSIS] AT SER-410</scope>
    <scope>IDENTIFICATION BY MASS SPECTROMETRY [LARGE SCALE ANALYSIS]</scope>
    <source>
        <tissue>Cervix carcinoma</tissue>
    </source>
</reference>
<reference key="24">
    <citation type="journal article" date="2008" name="Proc. Natl. Acad. Sci. U.S.A.">
        <title>A quantitative atlas of mitotic phosphorylation.</title>
        <authorList>
            <person name="Dephoure N."/>
            <person name="Zhou C."/>
            <person name="Villen J."/>
            <person name="Beausoleil S.A."/>
            <person name="Bakalarski C.E."/>
            <person name="Elledge S.J."/>
            <person name="Gygi S.P."/>
        </authorList>
    </citation>
    <scope>PHOSPHORYLATION [LARGE SCALE ANALYSIS] AT SER-226</scope>
    <scope>IDENTIFICATION BY MASS SPECTROMETRY [LARGE SCALE ANALYSIS]</scope>
    <source>
        <tissue>Cervix carcinoma</tissue>
    </source>
</reference>
<reference key="25">
    <citation type="journal article" date="2009" name="Anal. Chem.">
        <title>Lys-N and trypsin cover complementary parts of the phosphoproteome in a refined SCX-based approach.</title>
        <authorList>
            <person name="Gauci S."/>
            <person name="Helbig A.O."/>
            <person name="Slijper M."/>
            <person name="Krijgsveld J."/>
            <person name="Heck A.J."/>
            <person name="Mohammed S."/>
        </authorList>
    </citation>
    <scope>ACETYLATION [LARGE SCALE ANALYSIS] AT THR-2</scope>
    <scope>CLEAVAGE OF INITIATOR METHIONINE [LARGE SCALE ANALYSIS]</scope>
    <scope>IDENTIFICATION BY MASS SPECTROMETRY [LARGE SCALE ANALYSIS]</scope>
</reference>
<reference key="26">
    <citation type="journal article" date="2009" name="Mol. Cell. Proteomics">
        <title>Large-scale proteomics analysis of the human kinome.</title>
        <authorList>
            <person name="Oppermann F.S."/>
            <person name="Gnad F."/>
            <person name="Olsen J.V."/>
            <person name="Hornberger R."/>
            <person name="Greff Z."/>
            <person name="Keri G."/>
            <person name="Mann M."/>
            <person name="Daub H."/>
        </authorList>
    </citation>
    <scope>PHOSPHORYLATION [LARGE SCALE ANALYSIS] AT SER-226</scope>
    <scope>IDENTIFICATION BY MASS SPECTROMETRY [LARGE SCALE ANALYSIS]</scope>
</reference>
<reference key="27">
    <citation type="journal article" date="2009" name="Sci. Signal.">
        <title>Quantitative phosphoproteomic analysis of T cell receptor signaling reveals system-wide modulation of protein-protein interactions.</title>
        <authorList>
            <person name="Mayya V."/>
            <person name="Lundgren D.H."/>
            <person name="Hwang S.-I."/>
            <person name="Rezaul K."/>
            <person name="Wu L."/>
            <person name="Eng J.K."/>
            <person name="Rodionov V."/>
            <person name="Han D.K."/>
        </authorList>
    </citation>
    <scope>PHOSPHORYLATION [LARGE SCALE ANALYSIS] AT SER-320 AND SER-410</scope>
    <scope>IDENTIFICATION BY MASS SPECTROMETRY [LARGE SCALE ANALYSIS]</scope>
    <source>
        <tissue>Leukemic T-cell</tissue>
    </source>
</reference>
<reference key="28">
    <citation type="journal article" date="2009" name="Science">
        <title>Lysine acetylation targets protein complexes and co-regulates major cellular functions.</title>
        <authorList>
            <person name="Choudhary C."/>
            <person name="Kumar C."/>
            <person name="Gnad F."/>
            <person name="Nielsen M.L."/>
            <person name="Rehman M."/>
            <person name="Walther T.C."/>
            <person name="Olsen J.V."/>
            <person name="Mann M."/>
        </authorList>
    </citation>
    <scope>ACETYLATION [LARGE SCALE ANALYSIS] AT LYS-118</scope>
    <scope>IDENTIFICATION BY MASS SPECTROMETRY [LARGE SCALE ANALYSIS]</scope>
</reference>
<reference key="29">
    <citation type="journal article" date="2010" name="Sci. Signal.">
        <title>Quantitative phosphoproteomics reveals widespread full phosphorylation site occupancy during mitosis.</title>
        <authorList>
            <person name="Olsen J.V."/>
            <person name="Vermeulen M."/>
            <person name="Santamaria A."/>
            <person name="Kumar C."/>
            <person name="Miller M.L."/>
            <person name="Jensen L.J."/>
            <person name="Gnad F."/>
            <person name="Cox J."/>
            <person name="Jensen T.S."/>
            <person name="Nigg E.A."/>
            <person name="Brunak S."/>
            <person name="Mann M."/>
        </authorList>
    </citation>
    <scope>PHOSPHORYLATION [LARGE SCALE ANALYSIS] AT SER-226; SER-268; SER-320 AND SER-410</scope>
    <scope>IDENTIFICATION BY MASS SPECTROMETRY [LARGE SCALE ANALYSIS]</scope>
    <source>
        <tissue>Cervix carcinoma</tissue>
    </source>
</reference>
<reference key="30">
    <citation type="journal article" date="2011" name="BMC Syst. Biol.">
        <title>Initial characterization of the human central proteome.</title>
        <authorList>
            <person name="Burkard T.R."/>
            <person name="Planyavsky M."/>
            <person name="Kaupe I."/>
            <person name="Breitwieser F.P."/>
            <person name="Buerckstuemmer T."/>
            <person name="Bennett K.L."/>
            <person name="Superti-Furga G."/>
            <person name="Colinge J."/>
        </authorList>
    </citation>
    <scope>IDENTIFICATION BY MASS SPECTROMETRY [LARGE SCALE ANALYSIS]</scope>
</reference>
<reference key="31">
    <citation type="journal article" date="2011" name="Sci. Signal.">
        <title>System-wide temporal characterization of the proteome and phosphoproteome of human embryonic stem cell differentiation.</title>
        <authorList>
            <person name="Rigbolt K.T."/>
            <person name="Prokhorova T.A."/>
            <person name="Akimov V."/>
            <person name="Henningsen J."/>
            <person name="Johansen P.T."/>
            <person name="Kratchmarova I."/>
            <person name="Kassem M."/>
            <person name="Mann M."/>
            <person name="Olsen J.V."/>
            <person name="Blagoev B."/>
        </authorList>
    </citation>
    <scope>PHOSPHORYLATION [LARGE SCALE ANALYSIS] AT SER-226; SER-320 AND SER-410</scope>
    <scope>IDENTIFICATION BY MASS SPECTROMETRY [LARGE SCALE ANALYSIS]</scope>
</reference>
<reference key="32">
    <citation type="journal article" date="2012" name="Mol. Cell. Proteomics">
        <title>Comparative large-scale characterisation of plant vs. mammal proteins reveals similar and idiosyncratic N-alpha acetylation features.</title>
        <authorList>
            <person name="Bienvenut W.V."/>
            <person name="Sumpton D."/>
            <person name="Martinez A."/>
            <person name="Lilla S."/>
            <person name="Espagne C."/>
            <person name="Meinnel T."/>
            <person name="Giglione C."/>
        </authorList>
    </citation>
    <scope>ACETYLATION [LARGE SCALE ANALYSIS] AT THR-2</scope>
    <scope>CLEAVAGE OF INITIATOR METHIONINE [LARGE SCALE ANALYSIS]</scope>
    <scope>IDENTIFICATION BY MASS SPECTROMETRY [LARGE SCALE ANALYSIS]</scope>
</reference>
<reference key="33">
    <citation type="journal article" date="2013" name="J. Proteome Res.">
        <title>Toward a comprehensive characterization of a human cancer cell phosphoproteome.</title>
        <authorList>
            <person name="Zhou H."/>
            <person name="Di Palma S."/>
            <person name="Preisinger C."/>
            <person name="Peng M."/>
            <person name="Polat A.N."/>
            <person name="Heck A.J."/>
            <person name="Mohammed S."/>
        </authorList>
    </citation>
    <scope>PHOSPHORYLATION [LARGE SCALE ANALYSIS] AT TYR-126; SER-226; SER-320 AND SER-410</scope>
    <scope>IDENTIFICATION BY MASS SPECTROMETRY [LARGE SCALE ANALYSIS]</scope>
    <source>
        <tissue>Cervix carcinoma</tissue>
        <tissue>Erythroleukemia</tissue>
    </source>
</reference>
<reference key="34">
    <citation type="journal article" date="2014" name="J. Proteomics">
        <title>An enzyme assisted RP-RPLC approach for in-depth analysis of human liver phosphoproteome.</title>
        <authorList>
            <person name="Bian Y."/>
            <person name="Song C."/>
            <person name="Cheng K."/>
            <person name="Dong M."/>
            <person name="Wang F."/>
            <person name="Huang J."/>
            <person name="Sun D."/>
            <person name="Wang L."/>
            <person name="Ye M."/>
            <person name="Zou H."/>
        </authorList>
    </citation>
    <scope>PHOSPHORYLATION [LARGE SCALE ANALYSIS] AT SER-226 AND SER-320</scope>
    <scope>IDENTIFICATION BY MASS SPECTROMETRY [LARGE SCALE ANALYSIS]</scope>
    <source>
        <tissue>Liver</tissue>
    </source>
</reference>
<reference key="35">
    <citation type="journal article" date="2015" name="J. Biol. Chem.">
        <title>Gemin5 binds to the survival motor neuron mRNA to regulate SMN expression.</title>
        <authorList>
            <person name="Workman E."/>
            <person name="Kalda C."/>
            <person name="Patel A."/>
            <person name="Battle D.J."/>
        </authorList>
    </citation>
    <scope>INTERACTION WITH GEMIN5</scope>
</reference>
<reference key="36">
    <citation type="journal article" date="2015" name="Proc. Natl. Acad. Sci. U.S.A.">
        <title>FUS functions in coupling transcription to splicing by mediating an interaction between RNAP II and U1 snRNP.</title>
        <authorList>
            <person name="Yu Y."/>
            <person name="Reed R."/>
        </authorList>
    </citation>
    <scope>INTERACTION WITH FUS</scope>
</reference>
<reference key="37">
    <citation type="journal article" date="2017" name="Nat. Struct. Mol. Biol.">
        <title>Site-specific mapping of the human SUMO proteome reveals co-modification with phosphorylation.</title>
        <authorList>
            <person name="Hendriks I.A."/>
            <person name="Lyon D."/>
            <person name="Young C."/>
            <person name="Jensen L.J."/>
            <person name="Vertegaal A.C."/>
            <person name="Nielsen M.L."/>
        </authorList>
    </citation>
    <scope>SUMOYLATION [LARGE SCALE ANALYSIS] AT LYS-346</scope>
    <scope>IDENTIFICATION BY MASS SPECTROMETRY [LARGE SCALE ANALYSIS]</scope>
</reference>
<reference key="38">
    <citation type="journal article" date="2009" name="Nature">
        <title>Crystal structure of human spliceosomal U1 snRNP at 5.5 A resolution.</title>
        <authorList>
            <person name="Pomeranz Krummel D.A."/>
            <person name="Oubridge C."/>
            <person name="Leung A.K."/>
            <person name="Li J."/>
            <person name="Nagai K."/>
        </authorList>
    </citation>
    <scope>X-RAY CRYSTALLOGRAPHY (5.49 ANGSTROMS) OF 1-216 IN SPLICEOSOMAL U1 SNRNP</scope>
    <scope>FUNCTION</scope>
    <scope>SUBUNIT</scope>
</reference>
<reference evidence="25" key="39">
    <citation type="journal article" date="2010" name="EMBO J.">
        <title>Functional organization of the Sm core in the crystal structure of human U1 snRNP.</title>
        <authorList>
            <person name="Weber G."/>
            <person name="Trowitzsch S."/>
            <person name="Kastner B."/>
            <person name="Luhrmann R."/>
            <person name="Wahl M.C."/>
        </authorList>
    </citation>
    <scope>X-RAY CRYSTALLOGRAPHY (4.40 ANGSTROMS)</scope>
    <scope>IDENTIFICATION BY MASS SPECTROMETRY</scope>
    <scope>SUBUNIT</scope>
    <scope>SUBCELLULAR LOCATION</scope>
</reference>
<reference evidence="26 27" key="40">
    <citation type="journal article" date="2015" name="Elife">
        <title>Crystal structure of human U1 snRNP, a small nuclear ribonucleoprotein particle, reveals the mechanism of 5' splice site recognition.</title>
        <authorList>
            <person name="Kondo Y."/>
            <person name="Oubridge C."/>
            <person name="van Roon A.M."/>
            <person name="Nagai K."/>
        </authorList>
    </citation>
    <scope>X-RAY CRYSTALLOGRAPHY (2.50 ANGSTROMS) OF 60-215 IN COMPLEX WITH U1 SNRNP</scope>
    <scope>SUBUNIT</scope>
    <scope>RNA-BINDING</scope>
    <scope>FUNCTION</scope>
    <scope>DOMAIN</scope>
</reference>
<protein>
    <recommendedName>
        <fullName>U1 small nuclear ribonucleoprotein 70 kDa</fullName>
        <shortName evidence="23">U1 snRNP 70 kDa</shortName>
        <shortName evidence="21 22">U1-70K</shortName>
        <shortName>snRNP70</shortName>
    </recommendedName>
</protein>